<name>HIS6_ARCFU</name>
<reference key="1">
    <citation type="journal article" date="1997" name="Nature">
        <title>The complete genome sequence of the hyperthermophilic, sulphate-reducing archaeon Archaeoglobus fulgidus.</title>
        <authorList>
            <person name="Klenk H.-P."/>
            <person name="Clayton R.A."/>
            <person name="Tomb J.-F."/>
            <person name="White O."/>
            <person name="Nelson K.E."/>
            <person name="Ketchum K.A."/>
            <person name="Dodson R.J."/>
            <person name="Gwinn M.L."/>
            <person name="Hickey E.K."/>
            <person name="Peterson J.D."/>
            <person name="Richardson D.L."/>
            <person name="Kerlavage A.R."/>
            <person name="Graham D.E."/>
            <person name="Kyrpides N.C."/>
            <person name="Fleischmann R.D."/>
            <person name="Quackenbush J."/>
            <person name="Lee N.H."/>
            <person name="Sutton G.G."/>
            <person name="Gill S.R."/>
            <person name="Kirkness E.F."/>
            <person name="Dougherty B.A."/>
            <person name="McKenney K."/>
            <person name="Adams M.D."/>
            <person name="Loftus B.J."/>
            <person name="Peterson S.N."/>
            <person name="Reich C.I."/>
            <person name="McNeil L.K."/>
            <person name="Badger J.H."/>
            <person name="Glodek A."/>
            <person name="Zhou L."/>
            <person name="Overbeek R."/>
            <person name="Gocayne J.D."/>
            <person name="Weidman J.F."/>
            <person name="McDonald L.A."/>
            <person name="Utterback T.R."/>
            <person name="Cotton M.D."/>
            <person name="Spriggs T."/>
            <person name="Artiach P."/>
            <person name="Kaine B.P."/>
            <person name="Sykes S.M."/>
            <person name="Sadow P.W."/>
            <person name="D'Andrea K.P."/>
            <person name="Bowman C."/>
            <person name="Fujii C."/>
            <person name="Garland S.A."/>
            <person name="Mason T.M."/>
            <person name="Olsen G.J."/>
            <person name="Fraser C.M."/>
            <person name="Smith H.O."/>
            <person name="Woese C.R."/>
            <person name="Venter J.C."/>
        </authorList>
    </citation>
    <scope>NUCLEOTIDE SEQUENCE [LARGE SCALE GENOMIC DNA]</scope>
    <source>
        <strain>ATCC 49558 / DSM 4304 / JCM 9628 / NBRC 100126 / VC-16</strain>
    </source>
</reference>
<protein>
    <recommendedName>
        <fullName>Imidazole glycerol phosphate synthase subunit HisF</fullName>
        <ecNumber>4.3.2.10</ecNumber>
    </recommendedName>
    <alternativeName>
        <fullName>IGP synthase cyclase subunit</fullName>
    </alternativeName>
    <alternativeName>
        <fullName>IGP synthase subunit HisF</fullName>
    </alternativeName>
    <alternativeName>
        <fullName>ImGP synthase subunit HisF</fullName>
        <shortName>IGPS subunit HisF</shortName>
    </alternativeName>
</protein>
<dbReference type="EC" id="4.3.2.10"/>
<dbReference type="EMBL" id="AE000782">
    <property type="protein sequence ID" value="AAB90415.1"/>
    <property type="molecule type" value="Genomic_DNA"/>
</dbReference>
<dbReference type="PIR" id="C69352">
    <property type="entry name" value="C69352"/>
</dbReference>
<dbReference type="RefSeq" id="WP_010878322.1">
    <property type="nucleotide sequence ID" value="NC_000917.1"/>
</dbReference>
<dbReference type="SMR" id="O29439"/>
<dbReference type="STRING" id="224325.AF_0819"/>
<dbReference type="PaxDb" id="224325-AF_0819"/>
<dbReference type="EnsemblBacteria" id="AAB90415">
    <property type="protein sequence ID" value="AAB90415"/>
    <property type="gene ID" value="AF_0819"/>
</dbReference>
<dbReference type="GeneID" id="24794420"/>
<dbReference type="KEGG" id="afu:AF_0819"/>
<dbReference type="eggNOG" id="arCOG00617">
    <property type="taxonomic scope" value="Archaea"/>
</dbReference>
<dbReference type="HOGENOM" id="CLU_048577_4_0_2"/>
<dbReference type="OrthoDB" id="6261at2157"/>
<dbReference type="PhylomeDB" id="O29439"/>
<dbReference type="UniPathway" id="UPA00031">
    <property type="reaction ID" value="UER00010"/>
</dbReference>
<dbReference type="Proteomes" id="UP000002199">
    <property type="component" value="Chromosome"/>
</dbReference>
<dbReference type="GO" id="GO:0005737">
    <property type="term" value="C:cytoplasm"/>
    <property type="evidence" value="ECO:0007669"/>
    <property type="project" value="UniProtKB-SubCell"/>
</dbReference>
<dbReference type="GO" id="GO:0000107">
    <property type="term" value="F:imidazoleglycerol-phosphate synthase activity"/>
    <property type="evidence" value="ECO:0007669"/>
    <property type="project" value="UniProtKB-UniRule"/>
</dbReference>
<dbReference type="GO" id="GO:0016829">
    <property type="term" value="F:lyase activity"/>
    <property type="evidence" value="ECO:0007669"/>
    <property type="project" value="UniProtKB-KW"/>
</dbReference>
<dbReference type="GO" id="GO:0000105">
    <property type="term" value="P:L-histidine biosynthetic process"/>
    <property type="evidence" value="ECO:0007669"/>
    <property type="project" value="UniProtKB-UniRule"/>
</dbReference>
<dbReference type="CDD" id="cd04731">
    <property type="entry name" value="HisF"/>
    <property type="match status" value="1"/>
</dbReference>
<dbReference type="FunFam" id="3.20.20.70:FF:000006">
    <property type="entry name" value="Imidazole glycerol phosphate synthase subunit HisF"/>
    <property type="match status" value="1"/>
</dbReference>
<dbReference type="Gene3D" id="3.20.20.70">
    <property type="entry name" value="Aldolase class I"/>
    <property type="match status" value="1"/>
</dbReference>
<dbReference type="HAMAP" id="MF_01013">
    <property type="entry name" value="HisF"/>
    <property type="match status" value="1"/>
</dbReference>
<dbReference type="InterPro" id="IPR013785">
    <property type="entry name" value="Aldolase_TIM"/>
</dbReference>
<dbReference type="InterPro" id="IPR006062">
    <property type="entry name" value="His_biosynth"/>
</dbReference>
<dbReference type="InterPro" id="IPR004651">
    <property type="entry name" value="HisF"/>
</dbReference>
<dbReference type="InterPro" id="IPR050064">
    <property type="entry name" value="IGPS_HisA/HisF"/>
</dbReference>
<dbReference type="InterPro" id="IPR011060">
    <property type="entry name" value="RibuloseP-bd_barrel"/>
</dbReference>
<dbReference type="NCBIfam" id="TIGR00735">
    <property type="entry name" value="hisF"/>
    <property type="match status" value="1"/>
</dbReference>
<dbReference type="PANTHER" id="PTHR21235:SF2">
    <property type="entry name" value="IMIDAZOLE GLYCEROL PHOSPHATE SYNTHASE HISHF"/>
    <property type="match status" value="1"/>
</dbReference>
<dbReference type="PANTHER" id="PTHR21235">
    <property type="entry name" value="IMIDAZOLE GLYCEROL PHOSPHATE SYNTHASE SUBUNIT HISF/H IGP SYNTHASE SUBUNIT HISF/H"/>
    <property type="match status" value="1"/>
</dbReference>
<dbReference type="Pfam" id="PF00977">
    <property type="entry name" value="His_biosynth"/>
    <property type="match status" value="1"/>
</dbReference>
<dbReference type="SUPFAM" id="SSF51366">
    <property type="entry name" value="Ribulose-phoshate binding barrel"/>
    <property type="match status" value="1"/>
</dbReference>
<accession>O29439</accession>
<feature type="chain" id="PRO_0000142275" description="Imidazole glycerol phosphate synthase subunit HisF">
    <location>
        <begin position="1"/>
        <end position="271"/>
    </location>
</feature>
<feature type="active site" evidence="2">
    <location>
        <position position="11"/>
    </location>
</feature>
<feature type="active site" evidence="2">
    <location>
        <position position="134"/>
    </location>
</feature>
<gene>
    <name type="primary">hisF</name>
    <name type="ordered locus">AF_0819</name>
</gene>
<comment type="function">
    <text evidence="1">IGPS catalyzes the conversion of PRFAR and glutamine to IGP, AICAR and glutamate. The HisF subunit catalyzes the cyclization activity that produces IGP and AICAR from PRFAR using the ammonia provided by the HisH subunit (By similarity).</text>
</comment>
<comment type="catalytic activity">
    <reaction>
        <text>5-[(5-phospho-1-deoxy-D-ribulos-1-ylimino)methylamino]-1-(5-phospho-beta-D-ribosyl)imidazole-4-carboxamide + L-glutamine = D-erythro-1-(imidazol-4-yl)glycerol 3-phosphate + 5-amino-1-(5-phospho-beta-D-ribosyl)imidazole-4-carboxamide + L-glutamate + H(+)</text>
        <dbReference type="Rhea" id="RHEA:24793"/>
        <dbReference type="ChEBI" id="CHEBI:15378"/>
        <dbReference type="ChEBI" id="CHEBI:29985"/>
        <dbReference type="ChEBI" id="CHEBI:58278"/>
        <dbReference type="ChEBI" id="CHEBI:58359"/>
        <dbReference type="ChEBI" id="CHEBI:58475"/>
        <dbReference type="ChEBI" id="CHEBI:58525"/>
        <dbReference type="EC" id="4.3.2.10"/>
    </reaction>
</comment>
<comment type="pathway">
    <text>Amino-acid biosynthesis; L-histidine biosynthesis; L-histidine from 5-phospho-alpha-D-ribose 1-diphosphate: step 5/9.</text>
</comment>
<comment type="subunit">
    <text evidence="1">Heterodimer of HisH and HisF.</text>
</comment>
<comment type="subcellular location">
    <subcellularLocation>
        <location evidence="1">Cytoplasm</location>
    </subcellularLocation>
</comment>
<comment type="similarity">
    <text evidence="3">Belongs to the HisA/HisF family.</text>
</comment>
<sequence>MLAKRIIPCLDVTLDESEARVVKGVEFVNLRDAGDPVELAKRYDEEGADELVFLDITASPEGRRTMIDVIERTAEQVFIPFTVGGGIKSIEDINTILSAGADKVSINTAAVKNPEFVREAADIFGSQCIVVAIDCRRNFDLSKGEYIVELEDGTKAWYEVVIYGGRKPVGIDAVWWAKRVEELGAGEILLTSMNRDGTKDGFDIPITRKISEEVNIPVIASGGAGTKEHFYEGFVEGKADACLAASIFHYREIGIREIKEYLAERGVQVRL</sequence>
<evidence type="ECO:0000250" key="1"/>
<evidence type="ECO:0000255" key="2"/>
<evidence type="ECO:0000305" key="3"/>
<proteinExistence type="inferred from homology"/>
<keyword id="KW-0028">Amino-acid biosynthesis</keyword>
<keyword id="KW-0963">Cytoplasm</keyword>
<keyword id="KW-0368">Histidine biosynthesis</keyword>
<keyword id="KW-0456">Lyase</keyword>
<keyword id="KW-1185">Reference proteome</keyword>
<organism>
    <name type="scientific">Archaeoglobus fulgidus (strain ATCC 49558 / DSM 4304 / JCM 9628 / NBRC 100126 / VC-16)</name>
    <dbReference type="NCBI Taxonomy" id="224325"/>
    <lineage>
        <taxon>Archaea</taxon>
        <taxon>Methanobacteriati</taxon>
        <taxon>Methanobacteriota</taxon>
        <taxon>Archaeoglobi</taxon>
        <taxon>Archaeoglobales</taxon>
        <taxon>Archaeoglobaceae</taxon>
        <taxon>Archaeoglobus</taxon>
    </lineage>
</organism>